<feature type="chain" id="PRO_0000154093" description="Anthranilate synthase component 1">
    <location>
        <begin position="1"/>
        <end position="518"/>
    </location>
</feature>
<feature type="binding site" evidence="2">
    <location>
        <position position="41"/>
    </location>
    <ligand>
        <name>L-tryptophan</name>
        <dbReference type="ChEBI" id="CHEBI:57912"/>
    </ligand>
</feature>
<feature type="binding site" evidence="2">
    <location>
        <begin position="291"/>
        <end position="293"/>
    </location>
    <ligand>
        <name>L-tryptophan</name>
        <dbReference type="ChEBI" id="CHEBI:57912"/>
    </ligand>
</feature>
<feature type="binding site" evidence="2">
    <location>
        <begin position="328"/>
        <end position="329"/>
    </location>
    <ligand>
        <name>chorismate</name>
        <dbReference type="ChEBI" id="CHEBI:29748"/>
    </ligand>
</feature>
<feature type="binding site" evidence="2">
    <location>
        <position position="361"/>
    </location>
    <ligand>
        <name>Mg(2+)</name>
        <dbReference type="ChEBI" id="CHEBI:18420"/>
    </ligand>
</feature>
<feature type="binding site" evidence="2">
    <location>
        <position position="449"/>
    </location>
    <ligand>
        <name>chorismate</name>
        <dbReference type="ChEBI" id="CHEBI:29748"/>
    </ligand>
</feature>
<feature type="binding site" evidence="2">
    <location>
        <position position="469"/>
    </location>
    <ligand>
        <name>chorismate</name>
        <dbReference type="ChEBI" id="CHEBI:29748"/>
    </ligand>
</feature>
<feature type="binding site" evidence="2">
    <location>
        <begin position="483"/>
        <end position="485"/>
    </location>
    <ligand>
        <name>chorismate</name>
        <dbReference type="ChEBI" id="CHEBI:29748"/>
    </ligand>
</feature>
<feature type="binding site" evidence="2">
    <location>
        <position position="485"/>
    </location>
    <ligand>
        <name>chorismate</name>
        <dbReference type="ChEBI" id="CHEBI:29748"/>
    </ligand>
</feature>
<feature type="binding site" evidence="2">
    <location>
        <position position="498"/>
    </location>
    <ligand>
        <name>Mg(2+)</name>
        <dbReference type="ChEBI" id="CHEBI:18420"/>
    </ligand>
</feature>
<organism>
    <name type="scientific">Haemophilus influenzae (strain ATCC 51907 / DSM 11121 / KW20 / Rd)</name>
    <dbReference type="NCBI Taxonomy" id="71421"/>
    <lineage>
        <taxon>Bacteria</taxon>
        <taxon>Pseudomonadati</taxon>
        <taxon>Pseudomonadota</taxon>
        <taxon>Gammaproteobacteria</taxon>
        <taxon>Pasteurellales</taxon>
        <taxon>Pasteurellaceae</taxon>
        <taxon>Haemophilus</taxon>
    </lineage>
</organism>
<accession>P43761</accession>
<comment type="function">
    <text evidence="1">Part of a heterotetrameric complex that catalyzes the two-step biosynthesis of anthranilate, an intermediate in the biosynthesis of L-tryptophan. In the first step, the glutamine-binding beta subunit (TrpG) of anthranilate synthase (AS) provides the glutamine amidotransferase activity which generates ammonia as a substrate that, along with chorismate, is used in the second step, catalyzed by the large alpha subunit of AS (TrpE) to produce anthranilate. In the absence of TrpG, TrpE can synthesize anthranilate directly from chorismate and high concentrations of ammonia (By similarity).</text>
</comment>
<comment type="catalytic activity">
    <reaction>
        <text>chorismate + L-glutamine = anthranilate + pyruvate + L-glutamate + H(+)</text>
        <dbReference type="Rhea" id="RHEA:21732"/>
        <dbReference type="ChEBI" id="CHEBI:15361"/>
        <dbReference type="ChEBI" id="CHEBI:15378"/>
        <dbReference type="ChEBI" id="CHEBI:16567"/>
        <dbReference type="ChEBI" id="CHEBI:29748"/>
        <dbReference type="ChEBI" id="CHEBI:29985"/>
        <dbReference type="ChEBI" id="CHEBI:58359"/>
        <dbReference type="EC" id="4.1.3.27"/>
    </reaction>
</comment>
<comment type="cofactor">
    <cofactor evidence="2">
        <name>Mg(2+)</name>
        <dbReference type="ChEBI" id="CHEBI:18420"/>
    </cofactor>
    <text evidence="2">Binds 1 Mg(2+) ion per subunit.</text>
</comment>
<comment type="activity regulation">
    <text evidence="1">Feedback inhibited by tryptophan.</text>
</comment>
<comment type="pathway">
    <text>Amino-acid biosynthesis; L-tryptophan biosynthesis; L-tryptophan from chorismate: step 1/5.</text>
</comment>
<comment type="subunit">
    <text evidence="1">Heterotetramer consisting of two non-identical subunits: a beta subunit (TrpG) and a large alpha subunit (TrpE).</text>
</comment>
<comment type="similarity">
    <text evidence="3">Belongs to the anthranilate synthase component I family.</text>
</comment>
<sequence>MNIQTQAFIAVTAQPIPYYADTTAIFNTLCQSNSNSLLLDSAEIGSKNSLQSLILVNAAVKITCLGHNVTFKALNNNGKQVLKEIHPKLTALGKVSAVNFEDEFSVQFLPLDNQLDEDSKLQSATIFDGLRVISSLYQHSQTPIFLGGLFAYDLVANFIPMDGITLKNDGINCPDYSFYLAEHLITIDHQNQQATLKSFCFAQEEQVNIAKTSLSIAQKLKNIDHVLSIKAASDEVKTNFDDPEFTGIVKALKHHINIGDVFQIVPSRRFSLACPNTLASYAQLKQNNPSPYMFYMNDEDFILFGASPESALKYAPENRQLEIYPIAGSRPRGFDAHGNIDPELDARLELELRLDHKEQAEHLMLVDLARNDIARVCQSGTRKVAELMQVDRYSHIMHLVSRVVGKLRPELDALHAYQACMNMGTLTGAPKIKAMQLIYQFEQQKRHSYGGAVGYLTSDGHFDTCIVIRSAFVQNGMAHVQAGCGEVLDSDPQMEADETRHKAAAVLKAIRQVNTQAK</sequence>
<proteinExistence type="inferred from homology"/>
<gene>
    <name type="primary">trpE</name>
    <name type="ordered locus">HI_1387</name>
</gene>
<dbReference type="EC" id="4.1.3.27"/>
<dbReference type="EMBL" id="L42023">
    <property type="protein sequence ID" value="AAC23033.1"/>
    <property type="molecule type" value="Genomic_DNA"/>
</dbReference>
<dbReference type="PIR" id="C64121">
    <property type="entry name" value="C64121"/>
</dbReference>
<dbReference type="RefSeq" id="NP_439539.1">
    <property type="nucleotide sequence ID" value="NC_000907.1"/>
</dbReference>
<dbReference type="SMR" id="P43761"/>
<dbReference type="STRING" id="71421.HI_1387"/>
<dbReference type="EnsemblBacteria" id="AAC23033">
    <property type="protein sequence ID" value="AAC23033"/>
    <property type="gene ID" value="HI_1387"/>
</dbReference>
<dbReference type="KEGG" id="hin:HI_1387"/>
<dbReference type="PATRIC" id="fig|71421.8.peg.1444"/>
<dbReference type="eggNOG" id="COG0147">
    <property type="taxonomic scope" value="Bacteria"/>
</dbReference>
<dbReference type="HOGENOM" id="CLU_006493_9_4_6"/>
<dbReference type="OrthoDB" id="9803598at2"/>
<dbReference type="PhylomeDB" id="P43761"/>
<dbReference type="BioCyc" id="HINF71421:G1GJ1-1413-MONOMER"/>
<dbReference type="UniPathway" id="UPA00035">
    <property type="reaction ID" value="UER00040"/>
</dbReference>
<dbReference type="Proteomes" id="UP000000579">
    <property type="component" value="Chromosome"/>
</dbReference>
<dbReference type="GO" id="GO:0004049">
    <property type="term" value="F:anthranilate synthase activity"/>
    <property type="evidence" value="ECO:0007669"/>
    <property type="project" value="UniProtKB-EC"/>
</dbReference>
<dbReference type="GO" id="GO:0046872">
    <property type="term" value="F:metal ion binding"/>
    <property type="evidence" value="ECO:0007669"/>
    <property type="project" value="UniProtKB-KW"/>
</dbReference>
<dbReference type="GO" id="GO:0000162">
    <property type="term" value="P:L-tryptophan biosynthetic process"/>
    <property type="evidence" value="ECO:0000318"/>
    <property type="project" value="GO_Central"/>
</dbReference>
<dbReference type="Gene3D" id="3.60.120.10">
    <property type="entry name" value="Anthranilate synthase"/>
    <property type="match status" value="1"/>
</dbReference>
<dbReference type="InterPro" id="IPR005801">
    <property type="entry name" value="ADC_synthase"/>
</dbReference>
<dbReference type="InterPro" id="IPR019999">
    <property type="entry name" value="Anth_synth_I-like"/>
</dbReference>
<dbReference type="InterPro" id="IPR006805">
    <property type="entry name" value="Anth_synth_I_N"/>
</dbReference>
<dbReference type="InterPro" id="IPR005257">
    <property type="entry name" value="Anth_synth_I_TrpE"/>
</dbReference>
<dbReference type="InterPro" id="IPR015890">
    <property type="entry name" value="Chorismate_C"/>
</dbReference>
<dbReference type="NCBIfam" id="NF010079">
    <property type="entry name" value="PRK13564.1"/>
    <property type="match status" value="1"/>
</dbReference>
<dbReference type="NCBIfam" id="TIGR00565">
    <property type="entry name" value="trpE_proteo"/>
    <property type="match status" value="1"/>
</dbReference>
<dbReference type="PANTHER" id="PTHR11236">
    <property type="entry name" value="AMINOBENZOATE/ANTHRANILATE SYNTHASE"/>
    <property type="match status" value="1"/>
</dbReference>
<dbReference type="PANTHER" id="PTHR11236:SF49">
    <property type="entry name" value="ANTHRANILATE SYNTHASE COMPONENT 1"/>
    <property type="match status" value="1"/>
</dbReference>
<dbReference type="Pfam" id="PF04715">
    <property type="entry name" value="Anth_synt_I_N"/>
    <property type="match status" value="1"/>
</dbReference>
<dbReference type="Pfam" id="PF00425">
    <property type="entry name" value="Chorismate_bind"/>
    <property type="match status" value="1"/>
</dbReference>
<dbReference type="PIRSF" id="PIRSF001373">
    <property type="entry name" value="TrpE"/>
    <property type="match status" value="1"/>
</dbReference>
<dbReference type="PRINTS" id="PR00095">
    <property type="entry name" value="ANTSNTHASEI"/>
</dbReference>
<dbReference type="SUPFAM" id="SSF56322">
    <property type="entry name" value="ADC synthase"/>
    <property type="match status" value="1"/>
</dbReference>
<keyword id="KW-0028">Amino-acid biosynthesis</keyword>
<keyword id="KW-0057">Aromatic amino acid biosynthesis</keyword>
<keyword id="KW-0456">Lyase</keyword>
<keyword id="KW-0460">Magnesium</keyword>
<keyword id="KW-0479">Metal-binding</keyword>
<keyword id="KW-1185">Reference proteome</keyword>
<keyword id="KW-0822">Tryptophan biosynthesis</keyword>
<name>TRPE_HAEIN</name>
<protein>
    <recommendedName>
        <fullName>Anthranilate synthase component 1</fullName>
        <shortName>AS</shortName>
        <shortName>ASI</shortName>
        <ecNumber>4.1.3.27</ecNumber>
    </recommendedName>
</protein>
<reference key="1">
    <citation type="journal article" date="1995" name="Science">
        <title>Whole-genome random sequencing and assembly of Haemophilus influenzae Rd.</title>
        <authorList>
            <person name="Fleischmann R.D."/>
            <person name="Adams M.D."/>
            <person name="White O."/>
            <person name="Clayton R.A."/>
            <person name="Kirkness E.F."/>
            <person name="Kerlavage A.R."/>
            <person name="Bult C.J."/>
            <person name="Tomb J.-F."/>
            <person name="Dougherty B.A."/>
            <person name="Merrick J.M."/>
            <person name="McKenney K."/>
            <person name="Sutton G.G."/>
            <person name="FitzHugh W."/>
            <person name="Fields C.A."/>
            <person name="Gocayne J.D."/>
            <person name="Scott J.D."/>
            <person name="Shirley R."/>
            <person name="Liu L.-I."/>
            <person name="Glodek A."/>
            <person name="Kelley J.M."/>
            <person name="Weidman J.F."/>
            <person name="Phillips C.A."/>
            <person name="Spriggs T."/>
            <person name="Hedblom E."/>
            <person name="Cotton M.D."/>
            <person name="Utterback T.R."/>
            <person name="Hanna M.C."/>
            <person name="Nguyen D.T."/>
            <person name="Saudek D.M."/>
            <person name="Brandon R.C."/>
            <person name="Fine L.D."/>
            <person name="Fritchman J.L."/>
            <person name="Fuhrmann J.L."/>
            <person name="Geoghagen N.S.M."/>
            <person name="Gnehm C.L."/>
            <person name="McDonald L.A."/>
            <person name="Small K.V."/>
            <person name="Fraser C.M."/>
            <person name="Smith H.O."/>
            <person name="Venter J.C."/>
        </authorList>
    </citation>
    <scope>NUCLEOTIDE SEQUENCE [LARGE SCALE GENOMIC DNA]</scope>
    <source>
        <strain>ATCC 51907 / DSM 11121 / KW20 / Rd</strain>
    </source>
</reference>
<evidence type="ECO:0000250" key="1"/>
<evidence type="ECO:0000250" key="2">
    <source>
        <dbReference type="UniProtKB" id="P00897"/>
    </source>
</evidence>
<evidence type="ECO:0000305" key="3"/>